<gene>
    <name evidence="1" type="primary">glmU</name>
    <name type="ordered locus">NMCC_0039</name>
</gene>
<comment type="function">
    <text evidence="1">Catalyzes the last two sequential reactions in the de novo biosynthetic pathway for UDP-N-acetylglucosamine (UDP-GlcNAc). The C-terminal domain catalyzes the transfer of acetyl group from acetyl coenzyme A to glucosamine-1-phosphate (GlcN-1-P) to produce N-acetylglucosamine-1-phosphate (GlcNAc-1-P), which is converted into UDP-GlcNAc by the transfer of uridine 5-monophosphate (from uridine 5-triphosphate), a reaction catalyzed by the N-terminal domain.</text>
</comment>
<comment type="catalytic activity">
    <reaction evidence="1">
        <text>alpha-D-glucosamine 1-phosphate + acetyl-CoA = N-acetyl-alpha-D-glucosamine 1-phosphate + CoA + H(+)</text>
        <dbReference type="Rhea" id="RHEA:13725"/>
        <dbReference type="ChEBI" id="CHEBI:15378"/>
        <dbReference type="ChEBI" id="CHEBI:57287"/>
        <dbReference type="ChEBI" id="CHEBI:57288"/>
        <dbReference type="ChEBI" id="CHEBI:57776"/>
        <dbReference type="ChEBI" id="CHEBI:58516"/>
        <dbReference type="EC" id="2.3.1.157"/>
    </reaction>
</comment>
<comment type="catalytic activity">
    <reaction evidence="1">
        <text>N-acetyl-alpha-D-glucosamine 1-phosphate + UTP + H(+) = UDP-N-acetyl-alpha-D-glucosamine + diphosphate</text>
        <dbReference type="Rhea" id="RHEA:13509"/>
        <dbReference type="ChEBI" id="CHEBI:15378"/>
        <dbReference type="ChEBI" id="CHEBI:33019"/>
        <dbReference type="ChEBI" id="CHEBI:46398"/>
        <dbReference type="ChEBI" id="CHEBI:57705"/>
        <dbReference type="ChEBI" id="CHEBI:57776"/>
        <dbReference type="EC" id="2.7.7.23"/>
    </reaction>
</comment>
<comment type="cofactor">
    <cofactor evidence="1">
        <name>Mg(2+)</name>
        <dbReference type="ChEBI" id="CHEBI:18420"/>
    </cofactor>
    <text evidence="1">Binds 1 Mg(2+) ion per subunit.</text>
</comment>
<comment type="pathway">
    <text evidence="1">Nucleotide-sugar biosynthesis; UDP-N-acetyl-alpha-D-glucosamine biosynthesis; N-acetyl-alpha-D-glucosamine 1-phosphate from alpha-D-glucosamine 6-phosphate (route II): step 2/2.</text>
</comment>
<comment type="pathway">
    <text evidence="1">Nucleotide-sugar biosynthesis; UDP-N-acetyl-alpha-D-glucosamine biosynthesis; UDP-N-acetyl-alpha-D-glucosamine from N-acetyl-alpha-D-glucosamine 1-phosphate: step 1/1.</text>
</comment>
<comment type="pathway">
    <text evidence="1">Bacterial outer membrane biogenesis; LPS lipid A biosynthesis.</text>
</comment>
<comment type="subunit">
    <text evidence="1">Homotrimer.</text>
</comment>
<comment type="subcellular location">
    <subcellularLocation>
        <location evidence="1">Cytoplasm</location>
    </subcellularLocation>
</comment>
<comment type="similarity">
    <text evidence="1">In the N-terminal section; belongs to the N-acetylglucosamine-1-phosphate uridyltransferase family.</text>
</comment>
<comment type="similarity">
    <text evidence="1">In the C-terminal section; belongs to the transferase hexapeptide repeat family.</text>
</comment>
<dbReference type="EC" id="2.7.7.23" evidence="1"/>
<dbReference type="EC" id="2.3.1.157" evidence="1"/>
<dbReference type="EMBL" id="CP000381">
    <property type="protein sequence ID" value="ABX72269.1"/>
    <property type="molecule type" value="Genomic_DNA"/>
</dbReference>
<dbReference type="RefSeq" id="WP_012221112.1">
    <property type="nucleotide sequence ID" value="NC_010120.1"/>
</dbReference>
<dbReference type="SMR" id="A9LZT7"/>
<dbReference type="KEGG" id="nmn:NMCC_0039"/>
<dbReference type="HOGENOM" id="CLU_029499_15_2_4"/>
<dbReference type="UniPathway" id="UPA00113">
    <property type="reaction ID" value="UER00532"/>
</dbReference>
<dbReference type="UniPathway" id="UPA00113">
    <property type="reaction ID" value="UER00533"/>
</dbReference>
<dbReference type="UniPathway" id="UPA00973"/>
<dbReference type="Proteomes" id="UP000001177">
    <property type="component" value="Chromosome"/>
</dbReference>
<dbReference type="GO" id="GO:0005737">
    <property type="term" value="C:cytoplasm"/>
    <property type="evidence" value="ECO:0007669"/>
    <property type="project" value="UniProtKB-SubCell"/>
</dbReference>
<dbReference type="GO" id="GO:0016020">
    <property type="term" value="C:membrane"/>
    <property type="evidence" value="ECO:0007669"/>
    <property type="project" value="GOC"/>
</dbReference>
<dbReference type="GO" id="GO:0019134">
    <property type="term" value="F:glucosamine-1-phosphate N-acetyltransferase activity"/>
    <property type="evidence" value="ECO:0007669"/>
    <property type="project" value="UniProtKB-UniRule"/>
</dbReference>
<dbReference type="GO" id="GO:0000287">
    <property type="term" value="F:magnesium ion binding"/>
    <property type="evidence" value="ECO:0007669"/>
    <property type="project" value="UniProtKB-UniRule"/>
</dbReference>
<dbReference type="GO" id="GO:0003977">
    <property type="term" value="F:UDP-N-acetylglucosamine diphosphorylase activity"/>
    <property type="evidence" value="ECO:0007669"/>
    <property type="project" value="UniProtKB-UniRule"/>
</dbReference>
<dbReference type="GO" id="GO:0000902">
    <property type="term" value="P:cell morphogenesis"/>
    <property type="evidence" value="ECO:0007669"/>
    <property type="project" value="UniProtKB-UniRule"/>
</dbReference>
<dbReference type="GO" id="GO:0071555">
    <property type="term" value="P:cell wall organization"/>
    <property type="evidence" value="ECO:0007669"/>
    <property type="project" value="UniProtKB-KW"/>
</dbReference>
<dbReference type="GO" id="GO:0009245">
    <property type="term" value="P:lipid A biosynthetic process"/>
    <property type="evidence" value="ECO:0007669"/>
    <property type="project" value="UniProtKB-UniRule"/>
</dbReference>
<dbReference type="GO" id="GO:0009252">
    <property type="term" value="P:peptidoglycan biosynthetic process"/>
    <property type="evidence" value="ECO:0007669"/>
    <property type="project" value="UniProtKB-UniRule"/>
</dbReference>
<dbReference type="GO" id="GO:0008360">
    <property type="term" value="P:regulation of cell shape"/>
    <property type="evidence" value="ECO:0007669"/>
    <property type="project" value="UniProtKB-KW"/>
</dbReference>
<dbReference type="GO" id="GO:0006048">
    <property type="term" value="P:UDP-N-acetylglucosamine biosynthetic process"/>
    <property type="evidence" value="ECO:0007669"/>
    <property type="project" value="UniProtKB-UniPathway"/>
</dbReference>
<dbReference type="CDD" id="cd02540">
    <property type="entry name" value="GT2_GlmU_N_bac"/>
    <property type="match status" value="1"/>
</dbReference>
<dbReference type="CDD" id="cd03353">
    <property type="entry name" value="LbH_GlmU_C"/>
    <property type="match status" value="1"/>
</dbReference>
<dbReference type="Gene3D" id="2.160.10.10">
    <property type="entry name" value="Hexapeptide repeat proteins"/>
    <property type="match status" value="1"/>
</dbReference>
<dbReference type="Gene3D" id="3.90.550.10">
    <property type="entry name" value="Spore Coat Polysaccharide Biosynthesis Protein SpsA, Chain A"/>
    <property type="match status" value="1"/>
</dbReference>
<dbReference type="HAMAP" id="MF_01631">
    <property type="entry name" value="GlmU"/>
    <property type="match status" value="1"/>
</dbReference>
<dbReference type="InterPro" id="IPR005882">
    <property type="entry name" value="Bifunctional_GlmU"/>
</dbReference>
<dbReference type="InterPro" id="IPR050065">
    <property type="entry name" value="GlmU-like"/>
</dbReference>
<dbReference type="InterPro" id="IPR038009">
    <property type="entry name" value="GlmU_C_LbH"/>
</dbReference>
<dbReference type="InterPro" id="IPR001451">
    <property type="entry name" value="Hexapep"/>
</dbReference>
<dbReference type="InterPro" id="IPR025877">
    <property type="entry name" value="MobA-like_NTP_Trfase"/>
</dbReference>
<dbReference type="InterPro" id="IPR029044">
    <property type="entry name" value="Nucleotide-diphossugar_trans"/>
</dbReference>
<dbReference type="InterPro" id="IPR011004">
    <property type="entry name" value="Trimer_LpxA-like_sf"/>
</dbReference>
<dbReference type="NCBIfam" id="TIGR01173">
    <property type="entry name" value="glmU"/>
    <property type="match status" value="1"/>
</dbReference>
<dbReference type="PANTHER" id="PTHR43584:SF3">
    <property type="entry name" value="BIFUNCTIONAL PROTEIN GLMU"/>
    <property type="match status" value="1"/>
</dbReference>
<dbReference type="PANTHER" id="PTHR43584">
    <property type="entry name" value="NUCLEOTIDYL TRANSFERASE"/>
    <property type="match status" value="1"/>
</dbReference>
<dbReference type="Pfam" id="PF00132">
    <property type="entry name" value="Hexapep"/>
    <property type="match status" value="2"/>
</dbReference>
<dbReference type="Pfam" id="PF12804">
    <property type="entry name" value="NTP_transf_3"/>
    <property type="match status" value="1"/>
</dbReference>
<dbReference type="SUPFAM" id="SSF53448">
    <property type="entry name" value="Nucleotide-diphospho-sugar transferases"/>
    <property type="match status" value="1"/>
</dbReference>
<dbReference type="SUPFAM" id="SSF51161">
    <property type="entry name" value="Trimeric LpxA-like enzymes"/>
    <property type="match status" value="1"/>
</dbReference>
<keyword id="KW-0012">Acyltransferase</keyword>
<keyword id="KW-0133">Cell shape</keyword>
<keyword id="KW-0961">Cell wall biogenesis/degradation</keyword>
<keyword id="KW-0963">Cytoplasm</keyword>
<keyword id="KW-0460">Magnesium</keyword>
<keyword id="KW-0479">Metal-binding</keyword>
<keyword id="KW-0511">Multifunctional enzyme</keyword>
<keyword id="KW-0548">Nucleotidyltransferase</keyword>
<keyword id="KW-0573">Peptidoglycan synthesis</keyword>
<keyword id="KW-0677">Repeat</keyword>
<keyword id="KW-0808">Transferase</keyword>
<sequence length="456" mass="48754">MPQNTLNIVILAAGKGTRMYSKMPKVLHRIGGKPMLGRVIDTAAALNPQNICVVVGHGKEQVLDTVKRDVVWVEQTEQLGTGHAVKTALPHLAAEGRTLVLYGDVPLIDVETLKTLLEAAGDKVGLLTDVPTDPTGLGRIIRDGNGSVTAIVEEKDASTAQKAVKETNTGILVLPNAKLENWLNSLSSNNAQGEYYLTDLIAKAVSDGIKVRPVRVRASHLAAGVNNKLQLAELERIFQTGQAQELLKAGVTLHDPARFDLRGRLKHGQDVVIDANCIFEGEIELGDNVEIGASCVIKNAKIGANTKIAPFSHLEDCEVGENNRIGPYARLRPQARLADDVHVGNFVEIKNAAIGKGTKANHLTYIGDAEVGSKTNFGAGTIIANYDGVHKHKTVIGNEVRIGSNCVLVAPVTLGNKVTTGAGSAITRNVEDGKLALARARQTVIEGWVRPEKDKQ</sequence>
<proteinExistence type="inferred from homology"/>
<evidence type="ECO:0000255" key="1">
    <source>
        <dbReference type="HAMAP-Rule" id="MF_01631"/>
    </source>
</evidence>
<feature type="chain" id="PRO_1000088135" description="Bifunctional protein GlmU">
    <location>
        <begin position="1"/>
        <end position="456"/>
    </location>
</feature>
<feature type="region of interest" description="Pyrophosphorylase" evidence="1">
    <location>
        <begin position="1"/>
        <end position="228"/>
    </location>
</feature>
<feature type="region of interest" description="Linker" evidence="1">
    <location>
        <begin position="229"/>
        <end position="249"/>
    </location>
</feature>
<feature type="region of interest" description="N-acetyltransferase" evidence="1">
    <location>
        <begin position="250"/>
        <end position="456"/>
    </location>
</feature>
<feature type="active site" description="Proton acceptor" evidence="1">
    <location>
        <position position="362"/>
    </location>
</feature>
<feature type="binding site" evidence="1">
    <location>
        <begin position="11"/>
        <end position="14"/>
    </location>
    <ligand>
        <name>UDP-N-acetyl-alpha-D-glucosamine</name>
        <dbReference type="ChEBI" id="CHEBI:57705"/>
    </ligand>
</feature>
<feature type="binding site" evidence="1">
    <location>
        <position position="25"/>
    </location>
    <ligand>
        <name>UDP-N-acetyl-alpha-D-glucosamine</name>
        <dbReference type="ChEBI" id="CHEBI:57705"/>
    </ligand>
</feature>
<feature type="binding site" evidence="1">
    <location>
        <position position="75"/>
    </location>
    <ligand>
        <name>UDP-N-acetyl-alpha-D-glucosamine</name>
        <dbReference type="ChEBI" id="CHEBI:57705"/>
    </ligand>
</feature>
<feature type="binding site" evidence="1">
    <location>
        <begin position="80"/>
        <end position="81"/>
    </location>
    <ligand>
        <name>UDP-N-acetyl-alpha-D-glucosamine</name>
        <dbReference type="ChEBI" id="CHEBI:57705"/>
    </ligand>
</feature>
<feature type="binding site" evidence="1">
    <location>
        <begin position="102"/>
        <end position="104"/>
    </location>
    <ligand>
        <name>UDP-N-acetyl-alpha-D-glucosamine</name>
        <dbReference type="ChEBI" id="CHEBI:57705"/>
    </ligand>
</feature>
<feature type="binding site" evidence="1">
    <location>
        <position position="104"/>
    </location>
    <ligand>
        <name>Mg(2+)</name>
        <dbReference type="ChEBI" id="CHEBI:18420"/>
    </ligand>
</feature>
<feature type="binding site" evidence="1">
    <location>
        <position position="138"/>
    </location>
    <ligand>
        <name>UDP-N-acetyl-alpha-D-glucosamine</name>
        <dbReference type="ChEBI" id="CHEBI:57705"/>
    </ligand>
</feature>
<feature type="binding site" evidence="1">
    <location>
        <position position="153"/>
    </location>
    <ligand>
        <name>UDP-N-acetyl-alpha-D-glucosamine</name>
        <dbReference type="ChEBI" id="CHEBI:57705"/>
    </ligand>
</feature>
<feature type="binding site" evidence="1">
    <location>
        <position position="168"/>
    </location>
    <ligand>
        <name>UDP-N-acetyl-alpha-D-glucosamine</name>
        <dbReference type="ChEBI" id="CHEBI:57705"/>
    </ligand>
</feature>
<feature type="binding site" evidence="1">
    <location>
        <position position="226"/>
    </location>
    <ligand>
        <name>Mg(2+)</name>
        <dbReference type="ChEBI" id="CHEBI:18420"/>
    </ligand>
</feature>
<feature type="binding site" evidence="1">
    <location>
        <position position="226"/>
    </location>
    <ligand>
        <name>UDP-N-acetyl-alpha-D-glucosamine</name>
        <dbReference type="ChEBI" id="CHEBI:57705"/>
    </ligand>
</feature>
<feature type="binding site" evidence="1">
    <location>
        <position position="332"/>
    </location>
    <ligand>
        <name>UDP-N-acetyl-alpha-D-glucosamine</name>
        <dbReference type="ChEBI" id="CHEBI:57705"/>
    </ligand>
</feature>
<feature type="binding site" evidence="1">
    <location>
        <position position="350"/>
    </location>
    <ligand>
        <name>UDP-N-acetyl-alpha-D-glucosamine</name>
        <dbReference type="ChEBI" id="CHEBI:57705"/>
    </ligand>
</feature>
<feature type="binding site" evidence="1">
    <location>
        <position position="365"/>
    </location>
    <ligand>
        <name>UDP-N-acetyl-alpha-D-glucosamine</name>
        <dbReference type="ChEBI" id="CHEBI:57705"/>
    </ligand>
</feature>
<feature type="binding site" evidence="1">
    <location>
        <position position="376"/>
    </location>
    <ligand>
        <name>UDP-N-acetyl-alpha-D-glucosamine</name>
        <dbReference type="ChEBI" id="CHEBI:57705"/>
    </ligand>
</feature>
<feature type="binding site" evidence="1">
    <location>
        <position position="379"/>
    </location>
    <ligand>
        <name>acetyl-CoA</name>
        <dbReference type="ChEBI" id="CHEBI:57288"/>
    </ligand>
</feature>
<feature type="binding site" evidence="1">
    <location>
        <begin position="385"/>
        <end position="386"/>
    </location>
    <ligand>
        <name>acetyl-CoA</name>
        <dbReference type="ChEBI" id="CHEBI:57288"/>
    </ligand>
</feature>
<feature type="binding site" evidence="1">
    <location>
        <position position="404"/>
    </location>
    <ligand>
        <name>acetyl-CoA</name>
        <dbReference type="ChEBI" id="CHEBI:57288"/>
    </ligand>
</feature>
<feature type="binding site" evidence="1">
    <location>
        <position position="422"/>
    </location>
    <ligand>
        <name>acetyl-CoA</name>
        <dbReference type="ChEBI" id="CHEBI:57288"/>
    </ligand>
</feature>
<feature type="binding site" evidence="1">
    <location>
        <position position="439"/>
    </location>
    <ligand>
        <name>acetyl-CoA</name>
        <dbReference type="ChEBI" id="CHEBI:57288"/>
    </ligand>
</feature>
<protein>
    <recommendedName>
        <fullName evidence="1">Bifunctional protein GlmU</fullName>
    </recommendedName>
    <domain>
        <recommendedName>
            <fullName evidence="1">UDP-N-acetylglucosamine pyrophosphorylase</fullName>
            <ecNumber evidence="1">2.7.7.23</ecNumber>
        </recommendedName>
        <alternativeName>
            <fullName evidence="1">N-acetylglucosamine-1-phosphate uridyltransferase</fullName>
        </alternativeName>
    </domain>
    <domain>
        <recommendedName>
            <fullName evidence="1">Glucosamine-1-phosphate N-acetyltransferase</fullName>
            <ecNumber evidence="1">2.3.1.157</ecNumber>
        </recommendedName>
    </domain>
</protein>
<accession>A9LZT7</accession>
<reference key="1">
    <citation type="journal article" date="2008" name="Genomics">
        <title>Characterization of ST-4821 complex, a unique Neisseria meningitidis clone.</title>
        <authorList>
            <person name="Peng J."/>
            <person name="Yang L."/>
            <person name="Yang F."/>
            <person name="Yang J."/>
            <person name="Yan Y."/>
            <person name="Nie H."/>
            <person name="Zhang X."/>
            <person name="Xiong Z."/>
            <person name="Jiang Y."/>
            <person name="Cheng F."/>
            <person name="Xu X."/>
            <person name="Chen S."/>
            <person name="Sun L."/>
            <person name="Li W."/>
            <person name="Shen Y."/>
            <person name="Shao Z."/>
            <person name="Liang X."/>
            <person name="Xu J."/>
            <person name="Jin Q."/>
        </authorList>
    </citation>
    <scope>NUCLEOTIDE SEQUENCE [LARGE SCALE GENOMIC DNA]</scope>
    <source>
        <strain>053442</strain>
    </source>
</reference>
<organism>
    <name type="scientific">Neisseria meningitidis serogroup C (strain 053442)</name>
    <dbReference type="NCBI Taxonomy" id="374833"/>
    <lineage>
        <taxon>Bacteria</taxon>
        <taxon>Pseudomonadati</taxon>
        <taxon>Pseudomonadota</taxon>
        <taxon>Betaproteobacteria</taxon>
        <taxon>Neisseriales</taxon>
        <taxon>Neisseriaceae</taxon>
        <taxon>Neisseria</taxon>
    </lineage>
</organism>
<name>GLMU_NEIM0</name>